<name>ACPS_SYNC1</name>
<protein>
    <recommendedName>
        <fullName evidence="1">Holo-[acyl-carrier-protein] synthase</fullName>
        <shortName evidence="1">Holo-ACP synthase</shortName>
        <ecNumber evidence="1">2.7.8.7</ecNumber>
    </recommendedName>
    <alternativeName>
        <fullName evidence="1">4'-phosphopantetheinyl transferase AcpS</fullName>
    </alternativeName>
</protein>
<accession>Q3A5V3</accession>
<reference key="1">
    <citation type="submission" date="2005-10" db="EMBL/GenBank/DDBJ databases">
        <title>Complete sequence of Pelobacter carbinolicus DSM 2380.</title>
        <authorList>
            <person name="Copeland A."/>
            <person name="Lucas S."/>
            <person name="Lapidus A."/>
            <person name="Barry K."/>
            <person name="Detter J.C."/>
            <person name="Glavina T."/>
            <person name="Hammon N."/>
            <person name="Israni S."/>
            <person name="Pitluck S."/>
            <person name="Chertkov O."/>
            <person name="Schmutz J."/>
            <person name="Larimer F."/>
            <person name="Land M."/>
            <person name="Kyrpides N."/>
            <person name="Ivanova N."/>
            <person name="Richardson P."/>
        </authorList>
    </citation>
    <scope>NUCLEOTIDE SEQUENCE [LARGE SCALE GENOMIC DNA]</scope>
    <source>
        <strain>DSM 2380 / NBRC 103641 / GraBd1</strain>
    </source>
</reference>
<sequence>MPYLSGLGNDLVRIQRFRRFLEAGKTAILERLFTEEERSFCLAKKDPAPHFAVRFAAKEAFLKALGTGLRYGIRWQDMAVVRNPEGKPDLVLDGEAARLFEDRGHVRLLLSCSHDGDYAFATVVFEGN</sequence>
<feature type="chain" id="PRO_0000228296" description="Holo-[acyl-carrier-protein] synthase">
    <location>
        <begin position="1"/>
        <end position="128"/>
    </location>
</feature>
<feature type="binding site" evidence="1">
    <location>
        <position position="10"/>
    </location>
    <ligand>
        <name>Mg(2+)</name>
        <dbReference type="ChEBI" id="CHEBI:18420"/>
    </ligand>
</feature>
<feature type="binding site" evidence="1">
    <location>
        <position position="59"/>
    </location>
    <ligand>
        <name>Mg(2+)</name>
        <dbReference type="ChEBI" id="CHEBI:18420"/>
    </ligand>
</feature>
<comment type="function">
    <text evidence="1">Transfers the 4'-phosphopantetheine moiety from coenzyme A to a Ser of acyl-carrier-protein.</text>
</comment>
<comment type="catalytic activity">
    <reaction evidence="1">
        <text>apo-[ACP] + CoA = holo-[ACP] + adenosine 3',5'-bisphosphate + H(+)</text>
        <dbReference type="Rhea" id="RHEA:12068"/>
        <dbReference type="Rhea" id="RHEA-COMP:9685"/>
        <dbReference type="Rhea" id="RHEA-COMP:9690"/>
        <dbReference type="ChEBI" id="CHEBI:15378"/>
        <dbReference type="ChEBI" id="CHEBI:29999"/>
        <dbReference type="ChEBI" id="CHEBI:57287"/>
        <dbReference type="ChEBI" id="CHEBI:58343"/>
        <dbReference type="ChEBI" id="CHEBI:64479"/>
        <dbReference type="EC" id="2.7.8.7"/>
    </reaction>
</comment>
<comment type="cofactor">
    <cofactor evidence="1">
        <name>Mg(2+)</name>
        <dbReference type="ChEBI" id="CHEBI:18420"/>
    </cofactor>
</comment>
<comment type="subcellular location">
    <subcellularLocation>
        <location evidence="1">Cytoplasm</location>
    </subcellularLocation>
</comment>
<comment type="similarity">
    <text evidence="1">Belongs to the P-Pant transferase superfamily. AcpS family.</text>
</comment>
<gene>
    <name evidence="1" type="primary">acpS</name>
    <name type="ordered locus">Pcar_1003</name>
</gene>
<dbReference type="EC" id="2.7.8.7" evidence="1"/>
<dbReference type="EMBL" id="CP000142">
    <property type="protein sequence ID" value="ABA88254.1"/>
    <property type="molecule type" value="Genomic_DNA"/>
</dbReference>
<dbReference type="RefSeq" id="WP_011340722.1">
    <property type="nucleotide sequence ID" value="NC_007498.2"/>
</dbReference>
<dbReference type="SMR" id="Q3A5V3"/>
<dbReference type="STRING" id="338963.Pcar_1003"/>
<dbReference type="KEGG" id="pca:Pcar_1003"/>
<dbReference type="eggNOG" id="COG0736">
    <property type="taxonomic scope" value="Bacteria"/>
</dbReference>
<dbReference type="HOGENOM" id="CLU_089696_3_1_7"/>
<dbReference type="OrthoDB" id="517356at2"/>
<dbReference type="Proteomes" id="UP000002534">
    <property type="component" value="Chromosome"/>
</dbReference>
<dbReference type="GO" id="GO:0005737">
    <property type="term" value="C:cytoplasm"/>
    <property type="evidence" value="ECO:0007669"/>
    <property type="project" value="UniProtKB-SubCell"/>
</dbReference>
<dbReference type="GO" id="GO:0008897">
    <property type="term" value="F:holo-[acyl-carrier-protein] synthase activity"/>
    <property type="evidence" value="ECO:0007669"/>
    <property type="project" value="UniProtKB-UniRule"/>
</dbReference>
<dbReference type="GO" id="GO:0000287">
    <property type="term" value="F:magnesium ion binding"/>
    <property type="evidence" value="ECO:0007669"/>
    <property type="project" value="UniProtKB-UniRule"/>
</dbReference>
<dbReference type="GO" id="GO:0006633">
    <property type="term" value="P:fatty acid biosynthetic process"/>
    <property type="evidence" value="ECO:0007669"/>
    <property type="project" value="UniProtKB-UniRule"/>
</dbReference>
<dbReference type="Gene3D" id="3.90.470.20">
    <property type="entry name" value="4'-phosphopantetheinyl transferase domain"/>
    <property type="match status" value="1"/>
</dbReference>
<dbReference type="HAMAP" id="MF_00101">
    <property type="entry name" value="AcpS"/>
    <property type="match status" value="1"/>
</dbReference>
<dbReference type="InterPro" id="IPR008278">
    <property type="entry name" value="4-PPantetheinyl_Trfase_dom"/>
</dbReference>
<dbReference type="InterPro" id="IPR037143">
    <property type="entry name" value="4-PPantetheinyl_Trfase_dom_sf"/>
</dbReference>
<dbReference type="InterPro" id="IPR002582">
    <property type="entry name" value="ACPS"/>
</dbReference>
<dbReference type="InterPro" id="IPR004568">
    <property type="entry name" value="Ppantetheine-prot_Trfase_dom"/>
</dbReference>
<dbReference type="NCBIfam" id="TIGR00516">
    <property type="entry name" value="acpS"/>
    <property type="match status" value="1"/>
</dbReference>
<dbReference type="NCBIfam" id="TIGR00556">
    <property type="entry name" value="pantethn_trn"/>
    <property type="match status" value="1"/>
</dbReference>
<dbReference type="Pfam" id="PF01648">
    <property type="entry name" value="ACPS"/>
    <property type="match status" value="1"/>
</dbReference>
<dbReference type="SUPFAM" id="SSF56214">
    <property type="entry name" value="4'-phosphopantetheinyl transferase"/>
    <property type="match status" value="1"/>
</dbReference>
<proteinExistence type="inferred from homology"/>
<keyword id="KW-0963">Cytoplasm</keyword>
<keyword id="KW-0275">Fatty acid biosynthesis</keyword>
<keyword id="KW-0276">Fatty acid metabolism</keyword>
<keyword id="KW-0444">Lipid biosynthesis</keyword>
<keyword id="KW-0443">Lipid metabolism</keyword>
<keyword id="KW-0460">Magnesium</keyword>
<keyword id="KW-0479">Metal-binding</keyword>
<keyword id="KW-1185">Reference proteome</keyword>
<keyword id="KW-0808">Transferase</keyword>
<evidence type="ECO:0000255" key="1">
    <source>
        <dbReference type="HAMAP-Rule" id="MF_00101"/>
    </source>
</evidence>
<organism>
    <name type="scientific">Syntrophotalea carbinolica (strain DSM 2380 / NBRC 103641 / GraBd1)</name>
    <name type="common">Pelobacter carbinolicus</name>
    <dbReference type="NCBI Taxonomy" id="338963"/>
    <lineage>
        <taxon>Bacteria</taxon>
        <taxon>Pseudomonadati</taxon>
        <taxon>Thermodesulfobacteriota</taxon>
        <taxon>Desulfuromonadia</taxon>
        <taxon>Desulfuromonadales</taxon>
        <taxon>Syntrophotaleaceae</taxon>
        <taxon>Syntrophotalea</taxon>
    </lineage>
</organism>